<keyword id="KW-0025">Alternative splicing</keyword>
<keyword id="KW-0067">ATP-binding</keyword>
<keyword id="KW-0418">Kinase</keyword>
<keyword id="KW-0547">Nucleotide-binding</keyword>
<keyword id="KW-1185">Reference proteome</keyword>
<keyword id="KW-0808">Transferase</keyword>
<dbReference type="EC" id="2.7.1.137"/>
<dbReference type="EMBL" id="U56101">
    <property type="protein sequence ID" value="AAC47459.1"/>
    <property type="status" value="ALT_FRAME"/>
    <property type="molecule type" value="mRNA"/>
</dbReference>
<dbReference type="EMBL" id="BX284602">
    <property type="protein sequence ID" value="CAA91377.3"/>
    <property type="molecule type" value="Genomic_DNA"/>
</dbReference>
<dbReference type="EMBL" id="AL110499">
    <property type="protein sequence ID" value="CAA91377.3"/>
    <property type="status" value="JOINED"/>
    <property type="molecule type" value="Genomic_DNA"/>
</dbReference>
<dbReference type="EMBL" id="BX284602">
    <property type="protein sequence ID" value="CTQ86427.1"/>
    <property type="molecule type" value="Genomic_DNA"/>
</dbReference>
<dbReference type="PIR" id="B88318">
    <property type="entry name" value="B88318"/>
</dbReference>
<dbReference type="PIR" id="S71792">
    <property type="entry name" value="S71792"/>
</dbReference>
<dbReference type="RefSeq" id="NP_001300488.1">
    <molecule id="Q94125-3"/>
    <property type="nucleotide sequence ID" value="NM_001313559.3"/>
</dbReference>
<dbReference type="RefSeq" id="NP_496462.2">
    <molecule id="Q94125-1"/>
    <property type="nucleotide sequence ID" value="NM_064061.6"/>
</dbReference>
<dbReference type="SMR" id="Q94125"/>
<dbReference type="BioGRID" id="40069">
    <property type="interactions" value="3"/>
</dbReference>
<dbReference type="FunCoup" id="Q94125">
    <property type="interactions" value="2425"/>
</dbReference>
<dbReference type="STRING" id="6239.B0334.8a.1"/>
<dbReference type="PaxDb" id="6239-B0334.8"/>
<dbReference type="PeptideAtlas" id="Q94125"/>
<dbReference type="EnsemblMetazoa" id="B0334.8a.1">
    <molecule id="Q94125-1"/>
    <property type="protein sequence ID" value="B0334.8a.1"/>
    <property type="gene ID" value="WBGene00000090"/>
</dbReference>
<dbReference type="EnsemblMetazoa" id="B0334.8b.1">
    <molecule id="Q94125-3"/>
    <property type="protein sequence ID" value="B0334.8b.1"/>
    <property type="gene ID" value="WBGene00000090"/>
</dbReference>
<dbReference type="GeneID" id="174762"/>
<dbReference type="KEGG" id="cel:CELE_B0334.8"/>
<dbReference type="UCSC" id="B0334.8">
    <molecule id="Q94125-1"/>
    <property type="organism name" value="c. elegans"/>
</dbReference>
<dbReference type="AGR" id="WB:WBGene00000090"/>
<dbReference type="CTD" id="174762"/>
<dbReference type="WormBase" id="B0334.8a">
    <molecule id="Q94125-1"/>
    <property type="protein sequence ID" value="CE43431"/>
    <property type="gene ID" value="WBGene00000090"/>
    <property type="gene designation" value="age-1"/>
</dbReference>
<dbReference type="WormBase" id="B0334.8b">
    <molecule id="Q94125-3"/>
    <property type="protein sequence ID" value="CE02940"/>
    <property type="gene ID" value="WBGene00000090"/>
    <property type="gene designation" value="age-1"/>
</dbReference>
<dbReference type="eggNOG" id="KOG0904">
    <property type="taxonomic scope" value="Eukaryota"/>
</dbReference>
<dbReference type="GeneTree" id="ENSGT00940000170080"/>
<dbReference type="HOGENOM" id="CLU_002191_1_3_1"/>
<dbReference type="InParanoid" id="Q94125"/>
<dbReference type="OMA" id="WDCDRRF"/>
<dbReference type="OrthoDB" id="67688at2759"/>
<dbReference type="PhylomeDB" id="Q94125"/>
<dbReference type="BRENDA" id="2.7.1.137">
    <property type="organism ID" value="1045"/>
</dbReference>
<dbReference type="Reactome" id="R-CEL-114604">
    <property type="pathway name" value="GPVI-mediated activation cascade"/>
</dbReference>
<dbReference type="Reactome" id="R-CEL-1250342">
    <property type="pathway name" value="PI3K events in ERBB4 signaling"/>
</dbReference>
<dbReference type="Reactome" id="R-CEL-1257604">
    <property type="pathway name" value="PIP3 activates AKT signaling"/>
</dbReference>
<dbReference type="Reactome" id="R-CEL-1433557">
    <property type="pathway name" value="Signaling by SCF-KIT"/>
</dbReference>
<dbReference type="Reactome" id="R-CEL-1660499">
    <property type="pathway name" value="Synthesis of PIPs at the plasma membrane"/>
</dbReference>
<dbReference type="Reactome" id="R-CEL-180292">
    <property type="pathway name" value="GAB1 signalosome"/>
</dbReference>
<dbReference type="Reactome" id="R-CEL-186763">
    <property type="pathway name" value="Downstream signal transduction"/>
</dbReference>
<dbReference type="Reactome" id="R-CEL-1963642">
    <property type="pathway name" value="PI3K events in ERBB2 signaling"/>
</dbReference>
<dbReference type="Reactome" id="R-CEL-201556">
    <property type="pathway name" value="Signaling by ALK"/>
</dbReference>
<dbReference type="Reactome" id="R-CEL-416476">
    <property type="pathway name" value="G alpha (q) signalling events"/>
</dbReference>
<dbReference type="Reactome" id="R-CEL-4420097">
    <property type="pathway name" value="VEGFA-VEGFR2 Pathway"/>
</dbReference>
<dbReference type="Reactome" id="R-CEL-5654689">
    <property type="pathway name" value="PI-3K cascade:FGFR1"/>
</dbReference>
<dbReference type="Reactome" id="R-CEL-5654720">
    <property type="pathway name" value="PI-3K cascade:FGFR4"/>
</dbReference>
<dbReference type="Reactome" id="R-CEL-5673001">
    <property type="pathway name" value="RAF/MAP kinase cascade"/>
</dbReference>
<dbReference type="Reactome" id="R-CEL-6811558">
    <property type="pathway name" value="PI5P, PP2A and IER3 Regulate PI3K/AKT Signaling"/>
</dbReference>
<dbReference type="Reactome" id="R-CEL-8851907">
    <property type="pathway name" value="MET activates PI3K/AKT signaling"/>
</dbReference>
<dbReference type="Reactome" id="R-CEL-9009391">
    <property type="pathway name" value="Extra-nuclear estrogen signaling"/>
</dbReference>
<dbReference type="Reactome" id="R-CEL-9013149">
    <property type="pathway name" value="RAC1 GTPase cycle"/>
</dbReference>
<dbReference type="Reactome" id="R-CEL-9013404">
    <property type="pathway name" value="RAC2 GTPase cycle"/>
</dbReference>
<dbReference type="Reactome" id="R-CEL-912631">
    <property type="pathway name" value="Regulation of signaling by CBL"/>
</dbReference>
<dbReference type="SignaLink" id="Q94125"/>
<dbReference type="PRO" id="PR:Q94125"/>
<dbReference type="Proteomes" id="UP000001940">
    <property type="component" value="Chromosome II"/>
</dbReference>
<dbReference type="Bgee" id="WBGene00000090">
    <property type="expression patterns" value="Expressed in germ line (C elegans) and 4 other cell types or tissues"/>
</dbReference>
<dbReference type="GO" id="GO:0005737">
    <property type="term" value="C:cytoplasm"/>
    <property type="evidence" value="ECO:0000314"/>
    <property type="project" value="WormBase"/>
</dbReference>
<dbReference type="GO" id="GO:0097730">
    <property type="term" value="C:non-motile cilium"/>
    <property type="evidence" value="ECO:0000314"/>
    <property type="project" value="WormBase"/>
</dbReference>
<dbReference type="GO" id="GO:0005942">
    <property type="term" value="C:phosphatidylinositol 3-kinase complex"/>
    <property type="evidence" value="ECO:0000314"/>
    <property type="project" value="WormBase"/>
</dbReference>
<dbReference type="GO" id="GO:0005886">
    <property type="term" value="C:plasma membrane"/>
    <property type="evidence" value="ECO:0000318"/>
    <property type="project" value="GO_Central"/>
</dbReference>
<dbReference type="GO" id="GO:0016303">
    <property type="term" value="F:1-phosphatidylinositol-3-kinase activity"/>
    <property type="evidence" value="ECO:0000250"/>
    <property type="project" value="WormBase"/>
</dbReference>
<dbReference type="GO" id="GO:0035005">
    <property type="term" value="F:1-phosphatidylinositol-4-phosphate 3-kinase activity"/>
    <property type="evidence" value="ECO:0000318"/>
    <property type="project" value="GO_Central"/>
</dbReference>
<dbReference type="GO" id="GO:0005524">
    <property type="term" value="F:ATP binding"/>
    <property type="evidence" value="ECO:0007669"/>
    <property type="project" value="UniProtKB-KW"/>
</dbReference>
<dbReference type="GO" id="GO:0016477">
    <property type="term" value="P:cell migration"/>
    <property type="evidence" value="ECO:0000318"/>
    <property type="project" value="GO_Central"/>
</dbReference>
<dbReference type="GO" id="GO:1902075">
    <property type="term" value="P:cellular response to salt"/>
    <property type="evidence" value="ECO:0000315"/>
    <property type="project" value="UniProtKB"/>
</dbReference>
<dbReference type="GO" id="GO:0007635">
    <property type="term" value="P:chemosensory behavior"/>
    <property type="evidence" value="ECO:0000316"/>
    <property type="project" value="UniProtKB"/>
</dbReference>
<dbReference type="GO" id="GO:0006935">
    <property type="term" value="P:chemotaxis"/>
    <property type="evidence" value="ECO:0000316"/>
    <property type="project" value="UniProtKB"/>
</dbReference>
<dbReference type="GO" id="GO:0043053">
    <property type="term" value="P:dauer entry"/>
    <property type="evidence" value="ECO:0000315"/>
    <property type="project" value="WormBase"/>
</dbReference>
<dbReference type="GO" id="GO:0040024">
    <property type="term" value="P:dauer larval development"/>
    <property type="evidence" value="ECO:0000315"/>
    <property type="project" value="UniProtKB"/>
</dbReference>
<dbReference type="GO" id="GO:0008340">
    <property type="term" value="P:determination of adult lifespan"/>
    <property type="evidence" value="ECO:0000315"/>
    <property type="project" value="UniProtKB"/>
</dbReference>
<dbReference type="GO" id="GO:0009792">
    <property type="term" value="P:embryo development ending in birth or egg hatching"/>
    <property type="evidence" value="ECO:0000315"/>
    <property type="project" value="WormBase"/>
</dbReference>
<dbReference type="GO" id="GO:0007611">
    <property type="term" value="P:learning or memory"/>
    <property type="evidence" value="ECO:0000315"/>
    <property type="project" value="WormBase"/>
</dbReference>
<dbReference type="GO" id="GO:0043491">
    <property type="term" value="P:phosphatidylinositol 3-kinase/protein kinase B signal transduction"/>
    <property type="evidence" value="ECO:0000318"/>
    <property type="project" value="GO_Central"/>
</dbReference>
<dbReference type="GO" id="GO:0036092">
    <property type="term" value="P:phosphatidylinositol-3-phosphate biosynthetic process"/>
    <property type="evidence" value="ECO:0000318"/>
    <property type="project" value="GO_Central"/>
</dbReference>
<dbReference type="GO" id="GO:0048015">
    <property type="term" value="P:phosphatidylinositol-mediated signaling"/>
    <property type="evidence" value="ECO:0000318"/>
    <property type="project" value="GO_Central"/>
</dbReference>
<dbReference type="GO" id="GO:0050920">
    <property type="term" value="P:regulation of chemotaxis"/>
    <property type="evidence" value="ECO:0000315"/>
    <property type="project" value="WormBase"/>
</dbReference>
<dbReference type="GO" id="GO:0008582">
    <property type="term" value="P:regulation of synaptic assembly at neuromuscular junction"/>
    <property type="evidence" value="ECO:0000316"/>
    <property type="project" value="UniProtKB"/>
</dbReference>
<dbReference type="GO" id="GO:0046686">
    <property type="term" value="P:response to cadmium ion"/>
    <property type="evidence" value="ECO:0000315"/>
    <property type="project" value="WormBase"/>
</dbReference>
<dbReference type="GO" id="GO:0006979">
    <property type="term" value="P:response to oxidative stress"/>
    <property type="evidence" value="ECO:0000315"/>
    <property type="project" value="WormBase"/>
</dbReference>
<dbReference type="GO" id="GO:1902074">
    <property type="term" value="P:response to salt"/>
    <property type="evidence" value="ECO:0000316"/>
    <property type="project" value="UniProtKB"/>
</dbReference>
<dbReference type="CDD" id="cd08380">
    <property type="entry name" value="C2_PI3K_like"/>
    <property type="match status" value="1"/>
</dbReference>
<dbReference type="CDD" id="cd00864">
    <property type="entry name" value="PI3Ka"/>
    <property type="match status" value="1"/>
</dbReference>
<dbReference type="FunFam" id="1.10.1070.11:FF:000050">
    <property type="entry name" value="Phosphatidylinositol 3-kinase age-1"/>
    <property type="match status" value="1"/>
</dbReference>
<dbReference type="FunFam" id="1.25.40.70:FF:000024">
    <property type="entry name" value="Phosphatidylinositol 3-kinase age-1"/>
    <property type="match status" value="1"/>
</dbReference>
<dbReference type="FunFam" id="2.60.40.150:FF:000314">
    <property type="entry name" value="Phosphatidylinositol 3-kinase age-1"/>
    <property type="match status" value="1"/>
</dbReference>
<dbReference type="FunFam" id="3.10.20.770:FF:000007">
    <property type="entry name" value="Phosphatidylinositol 3-kinase age-1"/>
    <property type="match status" value="1"/>
</dbReference>
<dbReference type="Gene3D" id="3.10.20.770">
    <property type="match status" value="1"/>
</dbReference>
<dbReference type="Gene3D" id="2.60.40.150">
    <property type="entry name" value="C2 domain"/>
    <property type="match status" value="1"/>
</dbReference>
<dbReference type="Gene3D" id="1.10.1070.11">
    <property type="entry name" value="Phosphatidylinositol 3-/4-kinase, catalytic domain"/>
    <property type="match status" value="1"/>
</dbReference>
<dbReference type="Gene3D" id="3.30.1010.10">
    <property type="entry name" value="Phosphatidylinositol 3-kinase Catalytic Subunit, Chain A, domain 4"/>
    <property type="match status" value="1"/>
</dbReference>
<dbReference type="Gene3D" id="1.25.40.70">
    <property type="entry name" value="Phosphatidylinositol 3-kinase, accessory domain (PIK)"/>
    <property type="match status" value="1"/>
</dbReference>
<dbReference type="InterPro" id="IPR016024">
    <property type="entry name" value="ARM-type_fold"/>
</dbReference>
<dbReference type="InterPro" id="IPR035892">
    <property type="entry name" value="C2_domain_sf"/>
</dbReference>
<dbReference type="InterPro" id="IPR011009">
    <property type="entry name" value="Kinase-like_dom_sf"/>
</dbReference>
<dbReference type="InterPro" id="IPR000403">
    <property type="entry name" value="PI3/4_kinase_cat_dom"/>
</dbReference>
<dbReference type="InterPro" id="IPR036940">
    <property type="entry name" value="PI3/4_kinase_cat_sf"/>
</dbReference>
<dbReference type="InterPro" id="IPR018936">
    <property type="entry name" value="PI3/4_kinase_CS"/>
</dbReference>
<dbReference type="InterPro" id="IPR002420">
    <property type="entry name" value="PI3K-type_C2_dom"/>
</dbReference>
<dbReference type="InterPro" id="IPR003113">
    <property type="entry name" value="PI3K_ABD"/>
</dbReference>
<dbReference type="InterPro" id="IPR001263">
    <property type="entry name" value="PI3K_accessory_dom"/>
</dbReference>
<dbReference type="InterPro" id="IPR042236">
    <property type="entry name" value="PI3K_accessory_sf"/>
</dbReference>
<dbReference type="InterPro" id="IPR000341">
    <property type="entry name" value="PI3K_Ras-bd_dom"/>
</dbReference>
<dbReference type="InterPro" id="IPR015433">
    <property type="entry name" value="PI_Kinase"/>
</dbReference>
<dbReference type="InterPro" id="IPR029071">
    <property type="entry name" value="Ubiquitin-like_domsf"/>
</dbReference>
<dbReference type="PANTHER" id="PTHR10048:SF111">
    <property type="entry name" value="PHOSPHATIDYLINOSITOL 3-KINASE AGE-1"/>
    <property type="match status" value="1"/>
</dbReference>
<dbReference type="PANTHER" id="PTHR10048">
    <property type="entry name" value="PHOSPHATIDYLINOSITOL KINASE"/>
    <property type="match status" value="1"/>
</dbReference>
<dbReference type="Pfam" id="PF00454">
    <property type="entry name" value="PI3_PI4_kinase"/>
    <property type="match status" value="1"/>
</dbReference>
<dbReference type="Pfam" id="PF00792">
    <property type="entry name" value="PI3K_C2"/>
    <property type="match status" value="1"/>
</dbReference>
<dbReference type="Pfam" id="PF02192">
    <property type="entry name" value="PI3K_p85B"/>
    <property type="match status" value="1"/>
</dbReference>
<dbReference type="Pfam" id="PF00794">
    <property type="entry name" value="PI3K_rbd"/>
    <property type="match status" value="1"/>
</dbReference>
<dbReference type="Pfam" id="PF00613">
    <property type="entry name" value="PI3Ka"/>
    <property type="match status" value="1"/>
</dbReference>
<dbReference type="SMART" id="SM00142">
    <property type="entry name" value="PI3K_C2"/>
    <property type="match status" value="1"/>
</dbReference>
<dbReference type="SMART" id="SM00143">
    <property type="entry name" value="PI3K_p85B"/>
    <property type="match status" value="1"/>
</dbReference>
<dbReference type="SMART" id="SM00144">
    <property type="entry name" value="PI3K_rbd"/>
    <property type="match status" value="1"/>
</dbReference>
<dbReference type="SMART" id="SM00145">
    <property type="entry name" value="PI3Ka"/>
    <property type="match status" value="1"/>
</dbReference>
<dbReference type="SMART" id="SM00146">
    <property type="entry name" value="PI3Kc"/>
    <property type="match status" value="1"/>
</dbReference>
<dbReference type="SUPFAM" id="SSF48371">
    <property type="entry name" value="ARM repeat"/>
    <property type="match status" value="1"/>
</dbReference>
<dbReference type="SUPFAM" id="SSF49562">
    <property type="entry name" value="C2 domain (Calcium/lipid-binding domain, CaLB)"/>
    <property type="match status" value="1"/>
</dbReference>
<dbReference type="SUPFAM" id="SSF56112">
    <property type="entry name" value="Protein kinase-like (PK-like)"/>
    <property type="match status" value="1"/>
</dbReference>
<dbReference type="SUPFAM" id="SSF54236">
    <property type="entry name" value="Ubiquitin-like"/>
    <property type="match status" value="1"/>
</dbReference>
<dbReference type="PROSITE" id="PS51547">
    <property type="entry name" value="C2_PI3K"/>
    <property type="match status" value="1"/>
</dbReference>
<dbReference type="PROSITE" id="PS00915">
    <property type="entry name" value="PI3_4_KINASE_1"/>
    <property type="match status" value="1"/>
</dbReference>
<dbReference type="PROSITE" id="PS00916">
    <property type="entry name" value="PI3_4_KINASE_2"/>
    <property type="match status" value="1"/>
</dbReference>
<dbReference type="PROSITE" id="PS50290">
    <property type="entry name" value="PI3_4_KINASE_3"/>
    <property type="match status" value="1"/>
</dbReference>
<dbReference type="PROSITE" id="PS51544">
    <property type="entry name" value="PI3K_ABD"/>
    <property type="match status" value="1"/>
</dbReference>
<dbReference type="PROSITE" id="PS51546">
    <property type="entry name" value="PI3K_RBD"/>
    <property type="match status" value="1"/>
</dbReference>
<dbReference type="PROSITE" id="PS51545">
    <property type="entry name" value="PIK_HELICAL"/>
    <property type="match status" value="1"/>
</dbReference>
<reference key="1">
    <citation type="journal article" date="1998" name="Science">
        <title>Genome sequence of the nematode C. elegans: a platform for investigating biology.</title>
        <authorList>
            <consortium name="The C. elegans sequencing consortium"/>
        </authorList>
    </citation>
    <scope>NUCLEOTIDE SEQUENCE [LARGE SCALE GENOMIC DNA]</scope>
    <source>
        <strain>Bristol N2</strain>
    </source>
</reference>
<reference key="2">
    <citation type="journal article" date="1996" name="Nature">
        <title>A phosphatidylinositol-3-OH kinase family member regulating longevity and diapause in Caenorhabditis elegans.</title>
        <authorList>
            <person name="Morris J.Z."/>
            <person name="Tissenbaum H.A."/>
            <person name="Ruvkun G."/>
        </authorList>
    </citation>
    <scope>NUCLEOTIDE SEQUENCE [MRNA] OF 16-1182</scope>
    <scope>FUNCTION</scope>
    <scope>DEVELOPMENTAL STAGE</scope>
    <scope>MUTAGENESIS OF PRO-842 AND SER-862</scope>
    <source>
        <strain>Bristol N2</strain>
    </source>
</reference>
<reference key="3">
    <citation type="submission" date="1997-06" db="EMBL/GenBank/DDBJ databases">
        <authorList>
            <person name="Morris J.Z."/>
            <person name="Tissenbaum H.A."/>
            <person name="Ruvkun G."/>
        </authorList>
    </citation>
    <scope>SEQUENCE REVISION</scope>
</reference>
<reference key="4">
    <citation type="journal article" date="2005" name="Mol. Microbiol.">
        <title>Paralysis and killing of Caenorhabditis elegans by enteropathogenic Escherichia coli requires the bacterial tryptophanase gene.</title>
        <authorList>
            <person name="Anyanful A."/>
            <person name="Dolan-Livengood J.M."/>
            <person name="Lewis T."/>
            <person name="Sheth S."/>
            <person name="Dezalia M.N."/>
            <person name="Sherman M.A."/>
            <person name="Kalman L.V."/>
            <person name="Benian G.M."/>
            <person name="Kalman D."/>
        </authorList>
    </citation>
    <scope>FUNCTION</scope>
</reference>
<reference key="5">
    <citation type="journal article" date="2006" name="Neuron">
        <title>The insulin/PI 3-kinase pathway regulates salt chemotaxis learning in Caenorhabditis elegans.</title>
        <authorList>
            <person name="Tomioka M."/>
            <person name="Adachi T."/>
            <person name="Suzuki H."/>
            <person name="Kunitomo H."/>
            <person name="Schafer W.R."/>
            <person name="Iino Y."/>
        </authorList>
    </citation>
    <scope>MUTAGENESIS OF PRO-842</scope>
</reference>
<reference key="6">
    <citation type="journal article" date="2011" name="Development">
        <title>A conserved PTEN/FOXO pathway regulates neuronal morphology during C. elegans development.</title>
        <authorList>
            <person name="Christensen R."/>
            <person name="de la Torre-Ubieta L."/>
            <person name="Bonni A."/>
            <person name="Colon-Ramos D.A."/>
        </authorList>
    </citation>
    <scope>FUNCTION</scope>
</reference>
<reference key="7">
    <citation type="journal article" date="2011" name="Genetics">
        <title>Identification of mutations that delay somatic or reproductive aging of Caenorhabditis elegans.</title>
        <authorList>
            <person name="Hughes S.E."/>
            <person name="Huang C."/>
            <person name="Kornfeld K."/>
        </authorList>
    </citation>
    <scope>FUNCTION</scope>
    <scope>MUTAGENESIS OF GLU-761 AND PRO-842</scope>
</reference>
<reference key="8">
    <citation type="journal article" date="2014" name="Nat. Struct. Mol. Biol.">
        <title>Caspase-activated phosphoinositide binding by CNT-1 promotes apoptosis by inhibiting the AKT pathway.</title>
        <authorList>
            <person name="Nakagawa A."/>
            <person name="Sullivan K.D."/>
            <person name="Xue D."/>
        </authorList>
    </citation>
    <scope>FUNCTION</scope>
</reference>
<reference key="9">
    <citation type="journal article" date="2016" name="Elife">
        <title>Parallel encoding of sensory history and behavioral preference during Caenorhabditis elegans olfactory learning.</title>
        <authorList>
            <person name="Cho C.E."/>
            <person name="Brueggemann C."/>
            <person name="L'Etoile N.D."/>
            <person name="Bargmann C.I."/>
        </authorList>
    </citation>
    <scope>FUNCTION</scope>
    <scope>MUTAGENESIS OF PRO-842</scope>
</reference>
<feature type="chain" id="PRO_0000088807" description="Phosphatidylinositol 3-kinase age-1">
    <location>
        <begin position="1"/>
        <end position="1182"/>
    </location>
</feature>
<feature type="domain" description="PI3K-ABD" evidence="2">
    <location>
        <begin position="74"/>
        <end position="174"/>
    </location>
</feature>
<feature type="domain" description="PI3K-RBD" evidence="4">
    <location>
        <begin position="266"/>
        <end position="358"/>
    </location>
</feature>
<feature type="domain" description="C2 PI3K-type" evidence="5">
    <location>
        <begin position="425"/>
        <end position="577"/>
    </location>
</feature>
<feature type="domain" description="PIK helical" evidence="3">
    <location>
        <begin position="601"/>
        <end position="788"/>
    </location>
</feature>
<feature type="domain" description="PI3K/PI4K catalytic" evidence="1">
    <location>
        <begin position="853"/>
        <end position="1168"/>
    </location>
</feature>
<feature type="region of interest" description="Disordered" evidence="6">
    <location>
        <begin position="1"/>
        <end position="24"/>
    </location>
</feature>
<feature type="region of interest" description="G-loop" evidence="1">
    <location>
        <begin position="859"/>
        <end position="865"/>
    </location>
</feature>
<feature type="region of interest" description="Catalytic loop" evidence="1">
    <location>
        <begin position="1028"/>
        <end position="1036"/>
    </location>
</feature>
<feature type="region of interest" description="Activation loop" evidence="1">
    <location>
        <begin position="1047"/>
        <end position="1073"/>
    </location>
</feature>
<feature type="compositionally biased region" description="Polar residues" evidence="6">
    <location>
        <begin position="1"/>
        <end position="16"/>
    </location>
</feature>
<feature type="splice variant" id="VSP_060474" description="In isoform b." evidence="14">
    <location>
        <begin position="1"/>
        <end position="1106"/>
    </location>
</feature>
<feature type="mutagenesis site" description="In am88; extends lifespan, increases pharyngeal pumping, and causes faster body movements. Also increases dauer formation." evidence="9">
    <original>E</original>
    <variation>L</variation>
    <location>
        <position position="761"/>
    </location>
</feature>
<feature type="mutagenesis site" description="In hx546; increases lifespan. Increases dauer formation. Fails to avoid NaCl after exposure to NaCl under starvation conditions. Defective in aversive olfactory learning. Reduces nuclear enrichment of egl-4 in the AWC neurons after odor conditioning." evidence="8 9 12 13">
    <original>P</original>
    <variation>S</variation>
    <location>
        <position position="842"/>
    </location>
</feature>
<feature type="mutagenesis site" description="In mg109." evidence="13">
    <original>S</original>
    <variation>N</variation>
    <location>
        <position position="862"/>
    </location>
</feature>
<feature type="sequence conflict" description="In Ref. 2; AAC47459." evidence="14" ref="2">
    <original>F</original>
    <variation>V</variation>
    <location>
        <position position="1046"/>
    </location>
</feature>
<accession>Q94125</accession>
<accession>A0A0K3ARF0</accession>
<accession>Q17482</accession>
<organism>
    <name type="scientific">Caenorhabditis elegans</name>
    <dbReference type="NCBI Taxonomy" id="6239"/>
    <lineage>
        <taxon>Eukaryota</taxon>
        <taxon>Metazoa</taxon>
        <taxon>Ecdysozoa</taxon>
        <taxon>Nematoda</taxon>
        <taxon>Chromadorea</taxon>
        <taxon>Rhabditida</taxon>
        <taxon>Rhabditina</taxon>
        <taxon>Rhabditomorpha</taxon>
        <taxon>Rhabditoidea</taxon>
        <taxon>Rhabditidae</taxon>
        <taxon>Peloderinae</taxon>
        <taxon>Caenorhabditis</taxon>
    </lineage>
</organism>
<comment type="function">
    <text evidence="7 9 10 11 12 13">Phosphatidylinositol 3-kinase homolog that regulates longevity and diapause (PubMed:21750263, PubMed:8700226). Promotes cell survival during embryonic development by recruiting akt-1/2 to the plasma membrane through the production of PtdIns(3,4,5)P3 (PubMed:25383666). Could function in the development or neuroendocrine signaling of the dauer pathway (PubMed:8700226). Mediates susceptibility to enteropathogenic E.coli infection (PubMed:16091039). May negatively regulate AYI interneuron neurite outgrowth (PubMed:22069193). Plays a role in aversive olfactory learning when an odor is associated with food deprivation (PubMed:27383131). Regulates this process by promoting the nuclear relocalization of egl-4 in AWC olfactory neurons after odor conditioning (PubMed:27383131).</text>
</comment>
<comment type="catalytic activity">
    <reaction>
        <text>a 1,2-diacyl-sn-glycero-3-phospho-(1D-myo-inositol) + ATP = a 1,2-diacyl-sn-glycero-3-phospho-(1D-myo-inositol-3-phosphate) + ADP + H(+)</text>
        <dbReference type="Rhea" id="RHEA:12709"/>
        <dbReference type="ChEBI" id="CHEBI:15378"/>
        <dbReference type="ChEBI" id="CHEBI:30616"/>
        <dbReference type="ChEBI" id="CHEBI:57880"/>
        <dbReference type="ChEBI" id="CHEBI:58088"/>
        <dbReference type="ChEBI" id="CHEBI:456216"/>
        <dbReference type="EC" id="2.7.1.137"/>
    </reaction>
</comment>
<comment type="alternative products">
    <event type="alternative splicing"/>
    <isoform>
        <id>Q94125-1</id>
        <name evidence="15">a</name>
        <sequence type="displayed"/>
    </isoform>
    <isoform>
        <id>Q94125-3</id>
        <name evidence="16">b</name>
        <sequence type="described" ref="VSP_060474"/>
    </isoform>
</comment>
<comment type="developmental stage">
    <text evidence="13">Expressed both maternally and zygotically.</text>
</comment>
<comment type="similarity">
    <text evidence="2 4 5">Belongs to the PI3/PI4-kinase family.</text>
</comment>
<comment type="sequence caution" evidence="14">
    <conflict type="frameshift">
        <sequence resource="EMBL-CDS" id="AAC47459"/>
    </conflict>
</comment>
<protein>
    <recommendedName>
        <fullName>Phosphatidylinositol 3-kinase age-1</fullName>
        <shortName>PI3-kinase age-1</shortName>
        <shortName>PI3K age-1</shortName>
        <shortName>PtdIns-3-kinase age-1</shortName>
        <ecNumber>2.7.1.137</ecNumber>
    </recommendedName>
    <alternativeName>
        <fullName>Aging alteration protein 1</fullName>
    </alternativeName>
</protein>
<name>AGE1_CAEEL</name>
<evidence type="ECO:0000255" key="1">
    <source>
        <dbReference type="PROSITE-ProRule" id="PRU00269"/>
    </source>
</evidence>
<evidence type="ECO:0000255" key="2">
    <source>
        <dbReference type="PROSITE-ProRule" id="PRU00877"/>
    </source>
</evidence>
<evidence type="ECO:0000255" key="3">
    <source>
        <dbReference type="PROSITE-ProRule" id="PRU00878"/>
    </source>
</evidence>
<evidence type="ECO:0000255" key="4">
    <source>
        <dbReference type="PROSITE-ProRule" id="PRU00879"/>
    </source>
</evidence>
<evidence type="ECO:0000255" key="5">
    <source>
        <dbReference type="PROSITE-ProRule" id="PRU00880"/>
    </source>
</evidence>
<evidence type="ECO:0000256" key="6">
    <source>
        <dbReference type="SAM" id="MobiDB-lite"/>
    </source>
</evidence>
<evidence type="ECO:0000269" key="7">
    <source>
    </source>
</evidence>
<evidence type="ECO:0000269" key="8">
    <source>
    </source>
</evidence>
<evidence type="ECO:0000269" key="9">
    <source>
    </source>
</evidence>
<evidence type="ECO:0000269" key="10">
    <source>
    </source>
</evidence>
<evidence type="ECO:0000269" key="11">
    <source>
    </source>
</evidence>
<evidence type="ECO:0000269" key="12">
    <source>
    </source>
</evidence>
<evidence type="ECO:0000269" key="13">
    <source>
    </source>
</evidence>
<evidence type="ECO:0000305" key="14"/>
<evidence type="ECO:0000312" key="15">
    <source>
        <dbReference type="WormBase" id="B0334.8a"/>
    </source>
</evidence>
<evidence type="ECO:0000312" key="16">
    <source>
        <dbReference type="WormBase" id="B0334.8b"/>
    </source>
</evidence>
<sequence>MSMGRSPSTTFRSRTGSHGARDLIAGHGRNSRRISQMHVNILHPQLQTMVEQWQMRERPSLETENGKGSLLLENEGVADIITMCPFGEVISVVFPWFLANVRTSLEIKLSDFKHQLFELIAPMKWGTYSVKPQDYVFRQLNNFGEIEVIFNDDQPLSKLELHGTFPMLFLYQPDGINRDKELMSDISHCLGYSLDKLEESLDEELRQFRASLWARTKKTCLTRGLEGTSHYAFPEEQYLCVGESCPKDLESKVKAAKLSYQMFWRKRKAEINGVCEKMMKIQIEFNPNETPKSLLHTFLYEMRKLDVYDTDDPADEGWFLQLAGRTTFVTNPDVKLTSYDGVRSELESYRCPGFVVRRQSLVLKDYCRPKPLYEPHYVRAHERKLALDVLSVSIDSTPKQSKNSDMVMTDFRPTASLKQVSLWDLDANLMIRPVNISGFDFPADVDMYVRIEFSVYVGTLTLASKSTTKVNAQFAKWNKEMYTFDLYMKDMPPSAVLSIRVLYGKVKLKSEEFEVGWVNMSLTDWRDELRQGQFLFHLWAPEPTANRSRIGENGARIGTNAAVTIEISSYGGRVRMPSQGQYTYLVKHRSTWTETLNIMGDDYESCIRDPGYKKLQMLVKKHESGIVLEEDEQRHVWMWRRYIQKQEPDLLIVLSELAFVWTDRENFSELYVMLEKWKPPSVAAALTLLGKRCTDRVIRKFAVEKLNEQLSPVTFHLFILPLIQALKYEPRAQSEVGMMLLTRALCDYRIGHRLFWLLRAEIARLRDCDLKSEEYRRISLLMEAYLRGNEEHIKIITRQVDMVDELTRISTLVKGMPKDVATMKLRDELRSISHKMENMDSPLDPVYKLGEMIIDKAIVLGSAKRPLMLHWKNKNPKSDLHLPFCAMIFKNGDDLRQDMLVLQVLEVMDNIWKAANIDCCLNPYAVLPMGEMIGIIEVVPNCKTIFEIQVGTGFMNTAVRSIDPSFMNKWIRKQCGIEDEKKKSKKDSTKNPIEKKIDNTQAMKKYFESVDRFLYSCVGYSVATYIMGIKDRHSDNLMLTEDGKYFHIDFGHILGHGKTKLGIQRDRQPFILTEHFMTVIRSGKSVDGNSHELQKFKTLCVEAYEVMWNNRDLFVSLFTLMLGMELPELSTKADLDHLKKTLFCNGESKEEARKFFAGIYEEAFNGSWSTKTNWLFHAVKHY</sequence>
<proteinExistence type="evidence at protein level"/>
<gene>
    <name evidence="15" type="primary">age-1</name>
    <name evidence="15" type="ORF">B0334.8</name>
</gene>